<sequence>MRPGGALLALLASLLLLLLLRLLWCPADAPGRARILVEESREATHGTPAALRTLRSPATAVPRATNSTYLNEKSLQLTEKCKNLQYGIESFSNKTKGYSENDYLQIITDIQSCPWKRQAEEYANFRAKLASCCDAVQNFVVSQNNTPVGTNMSYEVESKKEIPIKKNIFHMFPVSQPFVDYPYNQCAVVGNGGILNKSLCGTEIDKSDFVFRCNLPPTTGDVSKDVGSKTNLVTINPSIITLKYGNLKEKKALFLEDIATYGDAFFLLPAFSFRANTGTSFKVYYTLEESKARQKVLFFHPKYLKDLALFWRTKGVTAYRLSTGLMITSVAVELCKNVKLYGFWPFSKTVEDIPVSHHYYDNKLPKHGFHQMPKEYSQILQLHMKGILKLQFSKCEVA</sequence>
<gene>
    <name evidence="5" type="primary">ST8SIA6</name>
    <name type="synonym">SIAT8F</name>
</gene>
<keyword id="KW-1015">Disulfide bond</keyword>
<keyword id="KW-0325">Glycoprotein</keyword>
<keyword id="KW-0328">Glycosyltransferase</keyword>
<keyword id="KW-0333">Golgi apparatus</keyword>
<keyword id="KW-0443">Lipid metabolism</keyword>
<keyword id="KW-0472">Membrane</keyword>
<keyword id="KW-1267">Proteomics identification</keyword>
<keyword id="KW-1185">Reference proteome</keyword>
<keyword id="KW-0735">Signal-anchor</keyword>
<keyword id="KW-0808">Transferase</keyword>
<keyword id="KW-0812">Transmembrane</keyword>
<keyword id="KW-1133">Transmembrane helix</keyword>
<name>SIA8F_HUMAN</name>
<protein>
    <recommendedName>
        <fullName evidence="4">Alpha-2,8-sialyltransferase 8F</fullName>
        <ecNumber>2.4.99.-</ecNumber>
    </recommendedName>
    <alternativeName>
        <fullName>Sialyltransferase 8F</fullName>
        <shortName>SIAT8-F</shortName>
    </alternativeName>
    <alternativeName>
        <fullName>Sialyltransferase St8Sia VI</fullName>
        <shortName>ST8SiaVI</shortName>
    </alternativeName>
</protein>
<accession>P61647</accession>
<accession>B0YJ97</accession>
<accession>B9EH72</accession>
<accession>Q5VZH4</accession>
<comment type="function">
    <text evidence="2">Alpha-2,8-sialyltransferase that prefers O-glycans to N-glycans or glycolipids as acceptor substrates. The minimal acceptor substrate is the NeuAc-alpha-2,3(6)-Gal sequence at the non-reducing end of their carbohydrate groups.</text>
</comment>
<comment type="catalytic activity">
    <reaction evidence="2">
        <text>a ganglioside GM3 + CMP-N-acetyl-beta-neuraminate = a ganglioside GD3 + CMP + H(+)</text>
        <dbReference type="Rhea" id="RHEA:48288"/>
        <dbReference type="ChEBI" id="CHEBI:15378"/>
        <dbReference type="ChEBI" id="CHEBI:57812"/>
        <dbReference type="ChEBI" id="CHEBI:60377"/>
        <dbReference type="ChEBI" id="CHEBI:79210"/>
        <dbReference type="ChEBI" id="CHEBI:79214"/>
    </reaction>
</comment>
<comment type="catalytic activity">
    <reaction evidence="2">
        <text>a ganglioside GM3 (d18:1(4E)) + CMP-N-acetyl-beta-neuraminate = a ganglioside GD3 (d18:1(4E)) + CMP + H(+)</text>
        <dbReference type="Rhea" id="RHEA:41760"/>
        <dbReference type="ChEBI" id="CHEBI:15378"/>
        <dbReference type="ChEBI" id="CHEBI:57812"/>
        <dbReference type="ChEBI" id="CHEBI:60065"/>
        <dbReference type="ChEBI" id="CHEBI:60377"/>
        <dbReference type="ChEBI" id="CHEBI:78436"/>
    </reaction>
</comment>
<comment type="catalytic activity">
    <reaction evidence="2">
        <text>a ganglioside GD1a (d18:1(4E)) + CMP-N-acetyl-beta-neuraminate = a ganglioside GT1a (d18:1(4E)) + CMP + H(+)</text>
        <dbReference type="Rhea" id="RHEA:41768"/>
        <dbReference type="ChEBI" id="CHEBI:15378"/>
        <dbReference type="ChEBI" id="CHEBI:57812"/>
        <dbReference type="ChEBI" id="CHEBI:60377"/>
        <dbReference type="ChEBI" id="CHEBI:78445"/>
        <dbReference type="ChEBI" id="CHEBI:78447"/>
    </reaction>
</comment>
<comment type="catalytic activity">
    <reaction evidence="2">
        <text>a ganglioside GD1a + CMP-N-acetyl-beta-neuraminate = a ganglioside GT1a + CMP + H(+)</text>
        <dbReference type="Rhea" id="RHEA:48912"/>
        <dbReference type="ChEBI" id="CHEBI:15378"/>
        <dbReference type="ChEBI" id="CHEBI:57812"/>
        <dbReference type="ChEBI" id="CHEBI:60377"/>
        <dbReference type="ChEBI" id="CHEBI:82637"/>
        <dbReference type="ChEBI" id="CHEBI:90501"/>
    </reaction>
</comment>
<comment type="catalytic activity">
    <reaction evidence="2">
        <text>a ganglioside GM1b (d18:1(4E)) + CMP-N-acetyl-beta-neuraminate = a ganglioside GD1c (d18:1(4E)) + CMP + H(+)</text>
        <dbReference type="Rhea" id="RHEA:47576"/>
        <dbReference type="ChEBI" id="CHEBI:15378"/>
        <dbReference type="ChEBI" id="CHEBI:57812"/>
        <dbReference type="ChEBI" id="CHEBI:60377"/>
        <dbReference type="ChEBI" id="CHEBI:78568"/>
        <dbReference type="ChEBI" id="CHEBI:87787"/>
    </reaction>
</comment>
<comment type="catalytic activity">
    <reaction evidence="2">
        <text>a ganglioside GM1b + CMP-N-acetyl-beta-neuraminate = a ganglioside GD1c + CMP + H(+)</text>
        <dbReference type="Rhea" id="RHEA:48916"/>
        <dbReference type="ChEBI" id="CHEBI:15378"/>
        <dbReference type="ChEBI" id="CHEBI:57812"/>
        <dbReference type="ChEBI" id="CHEBI:60377"/>
        <dbReference type="ChEBI" id="CHEBI:90151"/>
        <dbReference type="ChEBI" id="CHEBI:90856"/>
    </reaction>
</comment>
<comment type="catalytic activity">
    <reaction evidence="2">
        <text>a ganglioside GM4 (d18:1(4E)) + CMP-N-acetyl-beta-neuraminate = an N-acetyl-alpha-neuraminosyl-(2-&gt;8)-N-acetyl-alpha-neuraminosyl-(2-&gt;3)-beta-D-galactosyl-(1&lt;-&gt;1')-N-acylsphing-4-enine + CMP + H(+)</text>
        <dbReference type="Rhea" id="RHEA:48924"/>
        <dbReference type="ChEBI" id="CHEBI:15378"/>
        <dbReference type="ChEBI" id="CHEBI:57812"/>
        <dbReference type="ChEBI" id="CHEBI:60377"/>
        <dbReference type="ChEBI" id="CHEBI:78482"/>
        <dbReference type="ChEBI" id="CHEBI:90858"/>
    </reaction>
</comment>
<comment type="catalytic activity">
    <reaction evidence="2">
        <text>N-acetyl-alpha-neuraminosyl-(2-&gt;3)-beta-D-galactosyl-(1&lt;-&gt;1')-ceramide + CMP-N-acetyl-beta-neuraminate = N-acetyl-alpha-neuraminosyl-(2-&gt;8)-N-acetyl-alpha-neuraminosyl-(2-&gt;3)-beta-D-galactosyl-(1&lt;-&gt;1')-ceramide + CMP + H(+)</text>
        <dbReference type="Rhea" id="RHEA:48928"/>
        <dbReference type="ChEBI" id="CHEBI:15378"/>
        <dbReference type="ChEBI" id="CHEBI:57812"/>
        <dbReference type="ChEBI" id="CHEBI:60377"/>
        <dbReference type="ChEBI" id="CHEBI:82643"/>
        <dbReference type="ChEBI" id="CHEBI:90859"/>
    </reaction>
</comment>
<comment type="catalytic activity">
    <reaction evidence="2">
        <text>a ganglioside GT1b (d18:1(4E)) + CMP-N-acetyl-beta-neuraminate = a ganglioside GQ1b (d18:1(4E)) + CMP + H(+)</text>
        <dbReference type="Rhea" id="RHEA:41772"/>
        <dbReference type="ChEBI" id="CHEBI:15378"/>
        <dbReference type="ChEBI" id="CHEBI:57812"/>
        <dbReference type="ChEBI" id="CHEBI:60377"/>
        <dbReference type="ChEBI" id="CHEBI:78452"/>
        <dbReference type="ChEBI" id="CHEBI:78455"/>
    </reaction>
</comment>
<comment type="catalytic activity">
    <reaction evidence="2">
        <text>a ganglioside GT1b + CMP-N-acetyl-beta-neuraminate = a ganglioside GQ1b + CMP + H(+)</text>
        <dbReference type="Rhea" id="RHEA:48932"/>
        <dbReference type="ChEBI" id="CHEBI:15378"/>
        <dbReference type="ChEBI" id="CHEBI:57812"/>
        <dbReference type="ChEBI" id="CHEBI:60377"/>
        <dbReference type="ChEBI" id="CHEBI:82940"/>
        <dbReference type="ChEBI" id="CHEBI:90862"/>
    </reaction>
</comment>
<comment type="pathway">
    <text>Protein modification; protein glycosylation.</text>
</comment>
<comment type="subcellular location">
    <subcellularLocation>
        <location evidence="4">Golgi apparatus membrane</location>
        <topology evidence="4">Single-pass type II membrane protein</topology>
    </subcellularLocation>
</comment>
<comment type="similarity">
    <text evidence="4">Belongs to the glycosyltransferase 29 family.</text>
</comment>
<comment type="online information" name="Functional Glycomics Gateway - GTase">
    <link uri="http://www.functionalglycomics.org/glycomics/molecule/jsp/glycoEnzyme/viewGlycoEnzyme.jsp?gbpId=gt_hum_641"/>
    <text>ST8Sia VI</text>
</comment>
<organism>
    <name type="scientific">Homo sapiens</name>
    <name type="common">Human</name>
    <dbReference type="NCBI Taxonomy" id="9606"/>
    <lineage>
        <taxon>Eukaryota</taxon>
        <taxon>Metazoa</taxon>
        <taxon>Chordata</taxon>
        <taxon>Craniata</taxon>
        <taxon>Vertebrata</taxon>
        <taxon>Euteleostomi</taxon>
        <taxon>Mammalia</taxon>
        <taxon>Eutheria</taxon>
        <taxon>Euarchontoglires</taxon>
        <taxon>Primates</taxon>
        <taxon>Haplorrhini</taxon>
        <taxon>Catarrhini</taxon>
        <taxon>Hominidae</taxon>
        <taxon>Homo</taxon>
    </lineage>
</organism>
<dbReference type="EC" id="2.4.99.-"/>
<dbReference type="EMBL" id="AJ621583">
    <property type="protein sequence ID" value="CAF21722.1"/>
    <property type="molecule type" value="mRNA"/>
</dbReference>
<dbReference type="EMBL" id="EF445032">
    <property type="protein sequence ID" value="ACA06074.1"/>
    <property type="molecule type" value="Genomic_DNA"/>
</dbReference>
<dbReference type="EMBL" id="EF445032">
    <property type="protein sequence ID" value="ACA06075.1"/>
    <property type="molecule type" value="Genomic_DNA"/>
</dbReference>
<dbReference type="EMBL" id="AL158164">
    <property type="status" value="NOT_ANNOTATED_CDS"/>
    <property type="molecule type" value="Genomic_DNA"/>
</dbReference>
<dbReference type="EMBL" id="AL160289">
    <property type="status" value="NOT_ANNOTATED_CDS"/>
    <property type="molecule type" value="Genomic_DNA"/>
</dbReference>
<dbReference type="EMBL" id="BC137102">
    <property type="protein sequence ID" value="AAI37103.1"/>
    <property type="molecule type" value="mRNA"/>
</dbReference>
<dbReference type="EMBL" id="BC137103">
    <property type="protein sequence ID" value="AAI37104.1"/>
    <property type="molecule type" value="mRNA"/>
</dbReference>
<dbReference type="CCDS" id="CCDS31158.1"/>
<dbReference type="RefSeq" id="NP_001004470.1">
    <property type="nucleotide sequence ID" value="NM_001004470.3"/>
</dbReference>
<dbReference type="SMR" id="P61647"/>
<dbReference type="BioGRID" id="130764">
    <property type="interactions" value="3"/>
</dbReference>
<dbReference type="FunCoup" id="P61647">
    <property type="interactions" value="195"/>
</dbReference>
<dbReference type="IntAct" id="P61647">
    <property type="interactions" value="1"/>
</dbReference>
<dbReference type="STRING" id="9606.ENSP00000366827"/>
<dbReference type="CAZy" id="GT29">
    <property type="family name" value="Glycosyltransferase Family 29"/>
</dbReference>
<dbReference type="GlyCosmos" id="P61647">
    <property type="glycosylation" value="4 sites, No reported glycans"/>
</dbReference>
<dbReference type="GlyGen" id="P61647">
    <property type="glycosylation" value="5 sites, 2 N-linked glycans (1 site), 1 O-linked glycan (1 site)"/>
</dbReference>
<dbReference type="iPTMnet" id="P61647"/>
<dbReference type="PhosphoSitePlus" id="P61647"/>
<dbReference type="BioMuta" id="ST8SIA6"/>
<dbReference type="DMDM" id="48428578"/>
<dbReference type="jPOST" id="P61647"/>
<dbReference type="MassIVE" id="P61647"/>
<dbReference type="PaxDb" id="9606-ENSP00000366827"/>
<dbReference type="PeptideAtlas" id="P61647"/>
<dbReference type="Antibodypedia" id="2510">
    <property type="antibodies" value="82 antibodies from 16 providers"/>
</dbReference>
<dbReference type="DNASU" id="338596"/>
<dbReference type="Ensembl" id="ENST00000377602.5">
    <property type="protein sequence ID" value="ENSP00000366827.4"/>
    <property type="gene ID" value="ENSG00000148488.17"/>
</dbReference>
<dbReference type="GeneID" id="338596"/>
<dbReference type="KEGG" id="hsa:338596"/>
<dbReference type="MANE-Select" id="ENST00000377602.5">
    <property type="protein sequence ID" value="ENSP00000366827.4"/>
    <property type="RefSeq nucleotide sequence ID" value="NM_001004470.3"/>
    <property type="RefSeq protein sequence ID" value="NP_001004470.1"/>
</dbReference>
<dbReference type="UCSC" id="uc001ipd.4">
    <property type="organism name" value="human"/>
</dbReference>
<dbReference type="AGR" id="HGNC:23317"/>
<dbReference type="CTD" id="338596"/>
<dbReference type="DisGeNET" id="338596"/>
<dbReference type="GeneCards" id="ST8SIA6"/>
<dbReference type="HGNC" id="HGNC:23317">
    <property type="gene designation" value="ST8SIA6"/>
</dbReference>
<dbReference type="HPA" id="ENSG00000148488">
    <property type="expression patterns" value="Tissue enhanced (breast, epididymis, lung)"/>
</dbReference>
<dbReference type="MIM" id="610139">
    <property type="type" value="gene"/>
</dbReference>
<dbReference type="neXtProt" id="NX_P61647"/>
<dbReference type="OpenTargets" id="ENSG00000148488"/>
<dbReference type="PharmGKB" id="PA134909138"/>
<dbReference type="VEuPathDB" id="HostDB:ENSG00000148488"/>
<dbReference type="eggNOG" id="KOG2692">
    <property type="taxonomic scope" value="Eukaryota"/>
</dbReference>
<dbReference type="GeneTree" id="ENSGT01030000234535"/>
<dbReference type="HOGENOM" id="CLU_048583_1_1_1"/>
<dbReference type="InParanoid" id="P61647"/>
<dbReference type="OMA" id="KKNIFHM"/>
<dbReference type="OrthoDB" id="10264956at2759"/>
<dbReference type="PAN-GO" id="P61647">
    <property type="GO annotations" value="4 GO annotations based on evolutionary models"/>
</dbReference>
<dbReference type="PhylomeDB" id="P61647"/>
<dbReference type="TreeFam" id="TF323961"/>
<dbReference type="BRENDA" id="2.4.99.8">
    <property type="organism ID" value="2681"/>
</dbReference>
<dbReference type="PathwayCommons" id="P61647"/>
<dbReference type="Reactome" id="R-HSA-4085001">
    <property type="pathway name" value="Sialic acid metabolism"/>
</dbReference>
<dbReference type="Reactome" id="R-HSA-975577">
    <property type="pathway name" value="N-Glycan antennae elongation"/>
</dbReference>
<dbReference type="UniPathway" id="UPA00378"/>
<dbReference type="BioGRID-ORCS" id="338596">
    <property type="hits" value="10 hits in 1156 CRISPR screens"/>
</dbReference>
<dbReference type="ChiTaRS" id="ST8SIA6">
    <property type="organism name" value="human"/>
</dbReference>
<dbReference type="GenomeRNAi" id="338596"/>
<dbReference type="Pharos" id="P61647">
    <property type="development level" value="Tbio"/>
</dbReference>
<dbReference type="PRO" id="PR:P61647"/>
<dbReference type="Proteomes" id="UP000005640">
    <property type="component" value="Chromosome 10"/>
</dbReference>
<dbReference type="RNAct" id="P61647">
    <property type="molecule type" value="protein"/>
</dbReference>
<dbReference type="Bgee" id="ENSG00000148488">
    <property type="expression patterns" value="Expressed in male germ line stem cell (sensu Vertebrata) in testis and 104 other cell types or tissues"/>
</dbReference>
<dbReference type="ExpressionAtlas" id="P61647">
    <property type="expression patterns" value="baseline and differential"/>
</dbReference>
<dbReference type="GO" id="GO:0000139">
    <property type="term" value="C:Golgi membrane"/>
    <property type="evidence" value="ECO:0000304"/>
    <property type="project" value="Reactome"/>
</dbReference>
<dbReference type="GO" id="GO:0003828">
    <property type="term" value="F:alpha-N-acetylneuraminate alpha-2,8-sialyltransferase activity"/>
    <property type="evidence" value="ECO:0000318"/>
    <property type="project" value="GO_Central"/>
</dbReference>
<dbReference type="GO" id="GO:0008373">
    <property type="term" value="F:sialyltransferase activity"/>
    <property type="evidence" value="ECO:0000250"/>
    <property type="project" value="BHF-UCL"/>
</dbReference>
<dbReference type="GO" id="GO:0001835">
    <property type="term" value="P:blastocyst hatching"/>
    <property type="evidence" value="ECO:0007669"/>
    <property type="project" value="Ensembl"/>
</dbReference>
<dbReference type="GO" id="GO:0016051">
    <property type="term" value="P:carbohydrate biosynthetic process"/>
    <property type="evidence" value="ECO:0000250"/>
    <property type="project" value="BHF-UCL"/>
</dbReference>
<dbReference type="GO" id="GO:0001574">
    <property type="term" value="P:ganglioside biosynthetic process"/>
    <property type="evidence" value="ECO:0000250"/>
    <property type="project" value="BHF-UCL"/>
</dbReference>
<dbReference type="GO" id="GO:0009247">
    <property type="term" value="P:glycolipid biosynthetic process"/>
    <property type="evidence" value="ECO:0000250"/>
    <property type="project" value="BHF-UCL"/>
</dbReference>
<dbReference type="GO" id="GO:0009100">
    <property type="term" value="P:glycoprotein metabolic process"/>
    <property type="evidence" value="ECO:0000250"/>
    <property type="project" value="BHF-UCL"/>
</dbReference>
<dbReference type="GO" id="GO:0006491">
    <property type="term" value="P:N-glycan processing"/>
    <property type="evidence" value="ECO:0000318"/>
    <property type="project" value="GO_Central"/>
</dbReference>
<dbReference type="GO" id="GO:0009311">
    <property type="term" value="P:oligosaccharide metabolic process"/>
    <property type="evidence" value="ECO:0000250"/>
    <property type="project" value="BHF-UCL"/>
</dbReference>
<dbReference type="GO" id="GO:0006486">
    <property type="term" value="P:protein glycosylation"/>
    <property type="evidence" value="ECO:0000318"/>
    <property type="project" value="GO_Central"/>
</dbReference>
<dbReference type="GO" id="GO:0006493">
    <property type="term" value="P:protein O-linked glycosylation"/>
    <property type="evidence" value="ECO:0000250"/>
    <property type="project" value="BHF-UCL"/>
</dbReference>
<dbReference type="CDD" id="cd23991">
    <property type="entry name" value="GT29_ST8SIA6"/>
    <property type="match status" value="1"/>
</dbReference>
<dbReference type="FunFam" id="3.90.1480.20:FF:000001">
    <property type="entry name" value="ST8 alpha-N-acetyl-neuraminide alpha-2,8-sialyltransferase 2"/>
    <property type="match status" value="1"/>
</dbReference>
<dbReference type="Gene3D" id="3.90.1480.20">
    <property type="entry name" value="Glycosyl transferase family 29"/>
    <property type="match status" value="1"/>
</dbReference>
<dbReference type="InterPro" id="IPR001675">
    <property type="entry name" value="Glyco_trans_29"/>
</dbReference>
<dbReference type="InterPro" id="IPR050943">
    <property type="entry name" value="Glycosyltr_29_Sialyltrsf"/>
</dbReference>
<dbReference type="InterPro" id="IPR038578">
    <property type="entry name" value="GT29-like_sf"/>
</dbReference>
<dbReference type="InterPro" id="IPR012163">
    <property type="entry name" value="Sialyl_trans"/>
</dbReference>
<dbReference type="PANTHER" id="PTHR11987">
    <property type="entry name" value="ALPHA-2,8-SIALYLTRANSFERASE"/>
    <property type="match status" value="1"/>
</dbReference>
<dbReference type="PANTHER" id="PTHR11987:SF29">
    <property type="entry name" value="ALPHA-2,8-SIALYLTRANSFERASE 8F"/>
    <property type="match status" value="1"/>
</dbReference>
<dbReference type="Pfam" id="PF00777">
    <property type="entry name" value="Glyco_transf_29"/>
    <property type="match status" value="1"/>
</dbReference>
<dbReference type="PIRSF" id="PIRSF005557">
    <property type="entry name" value="Sialyl_trans"/>
    <property type="match status" value="1"/>
</dbReference>
<evidence type="ECO:0000250" key="1">
    <source>
        <dbReference type="UniProtKB" id="O43173"/>
    </source>
</evidence>
<evidence type="ECO:0000250" key="2">
    <source>
        <dbReference type="UniProtKB" id="Q8K4T1"/>
    </source>
</evidence>
<evidence type="ECO:0000255" key="3"/>
<evidence type="ECO:0000305" key="4"/>
<evidence type="ECO:0000312" key="5">
    <source>
        <dbReference type="HGNC" id="HGNC:23317"/>
    </source>
</evidence>
<proteinExistence type="evidence at protein level"/>
<reference key="1">
    <citation type="submission" date="2004-01" db="EMBL/GenBank/DDBJ databases">
        <title>Molecular cloning and expression of a sixth human alpha2,8-sialyltransferase (hST8SiaVI).</title>
        <authorList>
            <person name="Teintenier-Lelievre M."/>
            <person name="Delannoy P."/>
            <person name="Harduin-Lepers A."/>
        </authorList>
    </citation>
    <scope>NUCLEOTIDE SEQUENCE [MRNA]</scope>
</reference>
<reference key="2">
    <citation type="submission" date="2007-02" db="EMBL/GenBank/DDBJ databases">
        <authorList>
            <consortium name="NHLBI resequencing and genotyping service (RS&amp;G)"/>
        </authorList>
    </citation>
    <scope>NUCLEOTIDE SEQUENCE [GENOMIC DNA]</scope>
</reference>
<reference key="3">
    <citation type="journal article" date="2004" name="Nature">
        <title>The DNA sequence and comparative analysis of human chromosome 10.</title>
        <authorList>
            <person name="Deloukas P."/>
            <person name="Earthrowl M.E."/>
            <person name="Grafham D.V."/>
            <person name="Rubenfield M."/>
            <person name="French L."/>
            <person name="Steward C.A."/>
            <person name="Sims S.K."/>
            <person name="Jones M.C."/>
            <person name="Searle S."/>
            <person name="Scott C."/>
            <person name="Howe K."/>
            <person name="Hunt S.E."/>
            <person name="Andrews T.D."/>
            <person name="Gilbert J.G.R."/>
            <person name="Swarbreck D."/>
            <person name="Ashurst J.L."/>
            <person name="Taylor A."/>
            <person name="Battles J."/>
            <person name="Bird C.P."/>
            <person name="Ainscough R."/>
            <person name="Almeida J.P."/>
            <person name="Ashwell R.I.S."/>
            <person name="Ambrose K.D."/>
            <person name="Babbage A.K."/>
            <person name="Bagguley C.L."/>
            <person name="Bailey J."/>
            <person name="Banerjee R."/>
            <person name="Bates K."/>
            <person name="Beasley H."/>
            <person name="Bray-Allen S."/>
            <person name="Brown A.J."/>
            <person name="Brown J.Y."/>
            <person name="Burford D.C."/>
            <person name="Burrill W."/>
            <person name="Burton J."/>
            <person name="Cahill P."/>
            <person name="Camire D."/>
            <person name="Carter N.P."/>
            <person name="Chapman J.C."/>
            <person name="Clark S.Y."/>
            <person name="Clarke G."/>
            <person name="Clee C.M."/>
            <person name="Clegg S."/>
            <person name="Corby N."/>
            <person name="Coulson A."/>
            <person name="Dhami P."/>
            <person name="Dutta I."/>
            <person name="Dunn M."/>
            <person name="Faulkner L."/>
            <person name="Frankish A."/>
            <person name="Frankland J.A."/>
            <person name="Garner P."/>
            <person name="Garnett J."/>
            <person name="Gribble S."/>
            <person name="Griffiths C."/>
            <person name="Grocock R."/>
            <person name="Gustafson E."/>
            <person name="Hammond S."/>
            <person name="Harley J.L."/>
            <person name="Hart E."/>
            <person name="Heath P.D."/>
            <person name="Ho T.P."/>
            <person name="Hopkins B."/>
            <person name="Horne J."/>
            <person name="Howden P.J."/>
            <person name="Huckle E."/>
            <person name="Hynds C."/>
            <person name="Johnson C."/>
            <person name="Johnson D."/>
            <person name="Kana A."/>
            <person name="Kay M."/>
            <person name="Kimberley A.M."/>
            <person name="Kershaw J.K."/>
            <person name="Kokkinaki M."/>
            <person name="Laird G.K."/>
            <person name="Lawlor S."/>
            <person name="Lee H.M."/>
            <person name="Leongamornlert D.A."/>
            <person name="Laird G."/>
            <person name="Lloyd C."/>
            <person name="Lloyd D.M."/>
            <person name="Loveland J."/>
            <person name="Lovell J."/>
            <person name="McLaren S."/>
            <person name="McLay K.E."/>
            <person name="McMurray A."/>
            <person name="Mashreghi-Mohammadi M."/>
            <person name="Matthews L."/>
            <person name="Milne S."/>
            <person name="Nickerson T."/>
            <person name="Nguyen M."/>
            <person name="Overton-Larty E."/>
            <person name="Palmer S.A."/>
            <person name="Pearce A.V."/>
            <person name="Peck A.I."/>
            <person name="Pelan S."/>
            <person name="Phillimore B."/>
            <person name="Porter K."/>
            <person name="Rice C.M."/>
            <person name="Rogosin A."/>
            <person name="Ross M.T."/>
            <person name="Sarafidou T."/>
            <person name="Sehra H.K."/>
            <person name="Shownkeen R."/>
            <person name="Skuce C.D."/>
            <person name="Smith M."/>
            <person name="Standring L."/>
            <person name="Sycamore N."/>
            <person name="Tester J."/>
            <person name="Thorpe A."/>
            <person name="Torcasso W."/>
            <person name="Tracey A."/>
            <person name="Tromans A."/>
            <person name="Tsolas J."/>
            <person name="Wall M."/>
            <person name="Walsh J."/>
            <person name="Wang H."/>
            <person name="Weinstock K."/>
            <person name="West A.P."/>
            <person name="Willey D.L."/>
            <person name="Whitehead S.L."/>
            <person name="Wilming L."/>
            <person name="Wray P.W."/>
            <person name="Young L."/>
            <person name="Chen Y."/>
            <person name="Lovering R.C."/>
            <person name="Moschonas N.K."/>
            <person name="Siebert R."/>
            <person name="Fechtel K."/>
            <person name="Bentley D."/>
            <person name="Durbin R.M."/>
            <person name="Hubbard T."/>
            <person name="Doucette-Stamm L."/>
            <person name="Beck S."/>
            <person name="Smith D.R."/>
            <person name="Rogers J."/>
        </authorList>
    </citation>
    <scope>NUCLEOTIDE SEQUENCE [LARGE SCALE GENOMIC DNA]</scope>
</reference>
<reference key="4">
    <citation type="journal article" date="2004" name="Genome Res.">
        <title>The status, quality, and expansion of the NIH full-length cDNA project: the Mammalian Gene Collection (MGC).</title>
        <authorList>
            <consortium name="The MGC Project Team"/>
        </authorList>
    </citation>
    <scope>NUCLEOTIDE SEQUENCE [LARGE SCALE MRNA]</scope>
    <source>
        <tissue>Testis</tissue>
    </source>
</reference>
<feature type="chain" id="PRO_0000149299" description="Alpha-2,8-sialyltransferase 8F">
    <location>
        <begin position="1"/>
        <end position="398"/>
    </location>
</feature>
<feature type="topological domain" description="Cytoplasmic" evidence="3">
    <location>
        <begin position="1"/>
        <end position="3"/>
    </location>
</feature>
<feature type="transmembrane region" description="Helical; Signal-anchor for type II membrane protein" evidence="3">
    <location>
        <begin position="4"/>
        <end position="24"/>
    </location>
</feature>
<feature type="topological domain" description="Lumenal" evidence="3">
    <location>
        <begin position="25"/>
        <end position="398"/>
    </location>
</feature>
<feature type="active site" description="Proton donor/acceptor" evidence="1">
    <location>
        <position position="370"/>
    </location>
</feature>
<feature type="binding site" evidence="1">
    <location>
        <position position="214"/>
    </location>
    <ligand>
        <name>substrate</name>
    </ligand>
</feature>
<feature type="binding site" evidence="1">
    <location>
        <begin position="236"/>
        <end position="238"/>
    </location>
    <ligand>
        <name>substrate</name>
    </ligand>
</feature>
<feature type="binding site" evidence="1">
    <location>
        <begin position="322"/>
        <end position="324"/>
    </location>
    <ligand>
        <name>substrate</name>
    </ligand>
</feature>
<feature type="glycosylation site" description="N-linked (GlcNAc...) asparagine" evidence="3">
    <location>
        <position position="66"/>
    </location>
</feature>
<feature type="glycosylation site" description="N-linked (GlcNAc...) asparagine" evidence="3">
    <location>
        <position position="93"/>
    </location>
</feature>
<feature type="glycosylation site" description="N-linked (GlcNAc...) asparagine" evidence="3">
    <location>
        <position position="151"/>
    </location>
</feature>
<feature type="glycosylation site" description="N-linked (GlcNAc...) asparagine" evidence="3">
    <location>
        <position position="196"/>
    </location>
</feature>
<feature type="disulfide bond" evidence="1">
    <location>
        <begin position="186"/>
        <end position="335"/>
    </location>
</feature>
<feature type="disulfide bond" evidence="1">
    <location>
        <begin position="200"/>
        <end position="395"/>
    </location>
</feature>